<sequence>MIFTLGWASLAAIFTFSIAMVVWGRNGDGSIDL</sequence>
<protein>
    <recommendedName>
        <fullName evidence="1">Cytochrome b6-f complex subunit 8</fullName>
    </recommendedName>
    <alternativeName>
        <fullName evidence="1">Cytochrome b6-f complex subunit PetN</fullName>
    </alternativeName>
    <alternativeName>
        <fullName evidence="1">Cytochrome b6-f complex subunit VIII</fullName>
    </alternativeName>
</protein>
<name>PETN_PROMT</name>
<reference key="1">
    <citation type="journal article" date="2007" name="PLoS Genet.">
        <title>Patterns and implications of gene gain and loss in the evolution of Prochlorococcus.</title>
        <authorList>
            <person name="Kettler G.C."/>
            <person name="Martiny A.C."/>
            <person name="Huang K."/>
            <person name="Zucker J."/>
            <person name="Coleman M.L."/>
            <person name="Rodrigue S."/>
            <person name="Chen F."/>
            <person name="Lapidus A."/>
            <person name="Ferriera S."/>
            <person name="Johnson J."/>
            <person name="Steglich C."/>
            <person name="Church G.M."/>
            <person name="Richardson P."/>
            <person name="Chisholm S.W."/>
        </authorList>
    </citation>
    <scope>NUCLEOTIDE SEQUENCE [LARGE SCALE GENOMIC DNA]</scope>
    <source>
        <strain>NATL2A</strain>
    </source>
</reference>
<gene>
    <name evidence="1" type="primary">petN</name>
    <name type="ordered locus">PMN2A_0290</name>
</gene>
<dbReference type="EMBL" id="CP000095">
    <property type="protein sequence ID" value="AAZ57782.1"/>
    <property type="molecule type" value="Genomic_DNA"/>
</dbReference>
<dbReference type="RefSeq" id="WP_011293824.1">
    <property type="nucleotide sequence ID" value="NC_007335.2"/>
</dbReference>
<dbReference type="SMR" id="Q46L46"/>
<dbReference type="STRING" id="59920.PMN2A_0290"/>
<dbReference type="KEGG" id="pmn:PMN2A_0290"/>
<dbReference type="HOGENOM" id="CLU_215774_0_0_3"/>
<dbReference type="OrthoDB" id="560308at2"/>
<dbReference type="PhylomeDB" id="Q46L46"/>
<dbReference type="Proteomes" id="UP000002535">
    <property type="component" value="Chromosome"/>
</dbReference>
<dbReference type="GO" id="GO:0009512">
    <property type="term" value="C:cytochrome b6f complex"/>
    <property type="evidence" value="ECO:0007669"/>
    <property type="project" value="InterPro"/>
</dbReference>
<dbReference type="GO" id="GO:0031676">
    <property type="term" value="C:plasma membrane-derived thylakoid membrane"/>
    <property type="evidence" value="ECO:0007669"/>
    <property type="project" value="UniProtKB-SubCell"/>
</dbReference>
<dbReference type="GO" id="GO:0045158">
    <property type="term" value="F:electron transporter, transferring electrons within cytochrome b6/f complex of photosystem II activity"/>
    <property type="evidence" value="ECO:0007669"/>
    <property type="project" value="InterPro"/>
</dbReference>
<dbReference type="GO" id="GO:0017004">
    <property type="term" value="P:cytochrome complex assembly"/>
    <property type="evidence" value="ECO:0007669"/>
    <property type="project" value="UniProtKB-UniRule"/>
</dbReference>
<dbReference type="GO" id="GO:0015979">
    <property type="term" value="P:photosynthesis"/>
    <property type="evidence" value="ECO:0007669"/>
    <property type="project" value="UniProtKB-KW"/>
</dbReference>
<dbReference type="HAMAP" id="MF_00395">
    <property type="entry name" value="Cytb6_f_PetN"/>
    <property type="match status" value="1"/>
</dbReference>
<dbReference type="InterPro" id="IPR036143">
    <property type="entry name" value="Cytochr_b6-f_cplx_su8_sf"/>
</dbReference>
<dbReference type="InterPro" id="IPR005497">
    <property type="entry name" value="Cytochrome_b6-f_cplx_su8"/>
</dbReference>
<dbReference type="NCBIfam" id="NF002709">
    <property type="entry name" value="PRK02529.1"/>
    <property type="match status" value="1"/>
</dbReference>
<dbReference type="NCBIfam" id="NF011331">
    <property type="entry name" value="PRK14747.1"/>
    <property type="match status" value="1"/>
</dbReference>
<dbReference type="Pfam" id="PF03742">
    <property type="entry name" value="PetN"/>
    <property type="match status" value="1"/>
</dbReference>
<dbReference type="SUPFAM" id="SSF103451">
    <property type="entry name" value="PetN subunit of the cytochrome b6f complex"/>
    <property type="match status" value="1"/>
</dbReference>
<comment type="function">
    <text evidence="1">Component of the cytochrome b6-f complex, which mediates electron transfer between photosystem II (PSII) and photosystem I (PSI), cyclic electron flow around PSI, and state transitions.</text>
</comment>
<comment type="subunit">
    <text evidence="1">The 4 large subunits of the cytochrome b6-f complex are cytochrome b6, subunit IV (17 kDa polypeptide, PetD), cytochrome f and the Rieske protein, while the 4 small subunits are PetG, PetL, PetM and PetN. The complex functions as a dimer.</text>
</comment>
<comment type="subcellular location">
    <subcellularLocation>
        <location evidence="1">Cellular thylakoid membrane</location>
        <topology evidence="1">Single-pass membrane protein</topology>
    </subcellularLocation>
</comment>
<comment type="similarity">
    <text evidence="1">Belongs to the PetN family.</text>
</comment>
<accession>Q46L46</accession>
<evidence type="ECO:0000255" key="1">
    <source>
        <dbReference type="HAMAP-Rule" id="MF_00395"/>
    </source>
</evidence>
<organism>
    <name type="scientific">Prochlorococcus marinus (strain NATL2A)</name>
    <dbReference type="NCBI Taxonomy" id="59920"/>
    <lineage>
        <taxon>Bacteria</taxon>
        <taxon>Bacillati</taxon>
        <taxon>Cyanobacteriota</taxon>
        <taxon>Cyanophyceae</taxon>
        <taxon>Synechococcales</taxon>
        <taxon>Prochlorococcaceae</taxon>
        <taxon>Prochlorococcus</taxon>
    </lineage>
</organism>
<feature type="chain" id="PRO_1000049578" description="Cytochrome b6-f complex subunit 8">
    <location>
        <begin position="1"/>
        <end position="33"/>
    </location>
</feature>
<feature type="transmembrane region" description="Helical" evidence="1">
    <location>
        <begin position="2"/>
        <end position="22"/>
    </location>
</feature>
<keyword id="KW-0249">Electron transport</keyword>
<keyword id="KW-0472">Membrane</keyword>
<keyword id="KW-0602">Photosynthesis</keyword>
<keyword id="KW-1185">Reference proteome</keyword>
<keyword id="KW-0793">Thylakoid</keyword>
<keyword id="KW-0812">Transmembrane</keyword>
<keyword id="KW-1133">Transmembrane helix</keyword>
<keyword id="KW-0813">Transport</keyword>
<proteinExistence type="inferred from homology"/>